<reference key="1">
    <citation type="submission" date="2007-12" db="EMBL/GenBank/DDBJ databases">
        <title>Complete sequence of chromosome of Francisella philomiragia subsp. philomiragia ATCC 25017.</title>
        <authorList>
            <consortium name="US DOE Joint Genome Institute"/>
            <person name="Copeland A."/>
            <person name="Lucas S."/>
            <person name="Lapidus A."/>
            <person name="Barry K."/>
            <person name="Detter J.C."/>
            <person name="Glavina del Rio T."/>
            <person name="Hammon N."/>
            <person name="Israni S."/>
            <person name="Dalin E."/>
            <person name="Tice H."/>
            <person name="Pitluck S."/>
            <person name="Chain P."/>
            <person name="Malfatti S."/>
            <person name="Shin M."/>
            <person name="Vergez L."/>
            <person name="Schmutz J."/>
            <person name="Larimer F."/>
            <person name="Land M."/>
            <person name="Hauser L."/>
            <person name="Richardson P."/>
        </authorList>
    </citation>
    <scope>NUCLEOTIDE SEQUENCE [LARGE SCALE GENOMIC DNA]</scope>
    <source>
        <strain>ATCC 25017 / CCUG 19701 / FSC 153 / O#319-036</strain>
    </source>
</reference>
<name>NDK_FRAP2</name>
<proteinExistence type="inferred from homology"/>
<gene>
    <name evidence="1" type="primary">ndk</name>
    <name type="ordered locus">Fphi_0549</name>
</gene>
<keyword id="KW-0067">ATP-binding</keyword>
<keyword id="KW-0963">Cytoplasm</keyword>
<keyword id="KW-0418">Kinase</keyword>
<keyword id="KW-0460">Magnesium</keyword>
<keyword id="KW-0479">Metal-binding</keyword>
<keyword id="KW-0546">Nucleotide metabolism</keyword>
<keyword id="KW-0547">Nucleotide-binding</keyword>
<keyword id="KW-0597">Phosphoprotein</keyword>
<keyword id="KW-0808">Transferase</keyword>
<protein>
    <recommendedName>
        <fullName evidence="1">Nucleoside diphosphate kinase</fullName>
        <shortName evidence="1">NDK</shortName>
        <shortName evidence="1">NDP kinase</shortName>
        <ecNumber evidence="1">2.7.4.6</ecNumber>
    </recommendedName>
    <alternativeName>
        <fullName evidence="1">Nucleoside-2-P kinase</fullName>
    </alternativeName>
</protein>
<accession>B0U0L6</accession>
<sequence>MNKQRTLSIIKPDAVEKNIIGEIYRRFEKSGLKVVAAKMKHLSKAEAEGFYAVHKDRPFFSALVEFMISGPVMIQVLEGDNAIAKNRKLMGATNPKEAEAGTIRADFADSIDANAVHGSDAPETAAQEIKYFFSDIEIVG</sequence>
<comment type="function">
    <text evidence="1">Major role in the synthesis of nucleoside triphosphates other than ATP. The ATP gamma phosphate is transferred to the NDP beta phosphate via a ping-pong mechanism, using a phosphorylated active-site intermediate.</text>
</comment>
<comment type="catalytic activity">
    <reaction evidence="1">
        <text>a 2'-deoxyribonucleoside 5'-diphosphate + ATP = a 2'-deoxyribonucleoside 5'-triphosphate + ADP</text>
        <dbReference type="Rhea" id="RHEA:44640"/>
        <dbReference type="ChEBI" id="CHEBI:30616"/>
        <dbReference type="ChEBI" id="CHEBI:61560"/>
        <dbReference type="ChEBI" id="CHEBI:73316"/>
        <dbReference type="ChEBI" id="CHEBI:456216"/>
        <dbReference type="EC" id="2.7.4.6"/>
    </reaction>
</comment>
<comment type="catalytic activity">
    <reaction evidence="1">
        <text>a ribonucleoside 5'-diphosphate + ATP = a ribonucleoside 5'-triphosphate + ADP</text>
        <dbReference type="Rhea" id="RHEA:18113"/>
        <dbReference type="ChEBI" id="CHEBI:30616"/>
        <dbReference type="ChEBI" id="CHEBI:57930"/>
        <dbReference type="ChEBI" id="CHEBI:61557"/>
        <dbReference type="ChEBI" id="CHEBI:456216"/>
        <dbReference type="EC" id="2.7.4.6"/>
    </reaction>
</comment>
<comment type="cofactor">
    <cofactor evidence="1">
        <name>Mg(2+)</name>
        <dbReference type="ChEBI" id="CHEBI:18420"/>
    </cofactor>
</comment>
<comment type="subunit">
    <text evidence="1">Homotetramer.</text>
</comment>
<comment type="subcellular location">
    <subcellularLocation>
        <location evidence="1">Cytoplasm</location>
    </subcellularLocation>
</comment>
<comment type="similarity">
    <text evidence="1">Belongs to the NDK family.</text>
</comment>
<organism>
    <name type="scientific">Francisella philomiragia subsp. philomiragia (strain ATCC 25017 / CCUG 19701 / FSC 153 / O#319-036)</name>
    <dbReference type="NCBI Taxonomy" id="484022"/>
    <lineage>
        <taxon>Bacteria</taxon>
        <taxon>Pseudomonadati</taxon>
        <taxon>Pseudomonadota</taxon>
        <taxon>Gammaproteobacteria</taxon>
        <taxon>Thiotrichales</taxon>
        <taxon>Francisellaceae</taxon>
        <taxon>Francisella</taxon>
    </lineage>
</organism>
<feature type="chain" id="PRO_1000080963" description="Nucleoside diphosphate kinase">
    <location>
        <begin position="1"/>
        <end position="140"/>
    </location>
</feature>
<feature type="active site" description="Pros-phosphohistidine intermediate" evidence="1">
    <location>
        <position position="117"/>
    </location>
</feature>
<feature type="binding site" evidence="1">
    <location>
        <position position="11"/>
    </location>
    <ligand>
        <name>ATP</name>
        <dbReference type="ChEBI" id="CHEBI:30616"/>
    </ligand>
</feature>
<feature type="binding site" evidence="1">
    <location>
        <position position="59"/>
    </location>
    <ligand>
        <name>ATP</name>
        <dbReference type="ChEBI" id="CHEBI:30616"/>
    </ligand>
</feature>
<feature type="binding site" evidence="1">
    <location>
        <position position="87"/>
    </location>
    <ligand>
        <name>ATP</name>
        <dbReference type="ChEBI" id="CHEBI:30616"/>
    </ligand>
</feature>
<feature type="binding site" evidence="1">
    <location>
        <position position="93"/>
    </location>
    <ligand>
        <name>ATP</name>
        <dbReference type="ChEBI" id="CHEBI:30616"/>
    </ligand>
</feature>
<feature type="binding site" evidence="1">
    <location>
        <position position="104"/>
    </location>
    <ligand>
        <name>ATP</name>
        <dbReference type="ChEBI" id="CHEBI:30616"/>
    </ligand>
</feature>
<feature type="binding site" evidence="1">
    <location>
        <position position="114"/>
    </location>
    <ligand>
        <name>ATP</name>
        <dbReference type="ChEBI" id="CHEBI:30616"/>
    </ligand>
</feature>
<dbReference type="EC" id="2.7.4.6" evidence="1"/>
<dbReference type="EMBL" id="CP000937">
    <property type="protein sequence ID" value="ABZ86767.1"/>
    <property type="molecule type" value="Genomic_DNA"/>
</dbReference>
<dbReference type="SMR" id="B0U0L6"/>
<dbReference type="KEGG" id="fph:Fphi_0549"/>
<dbReference type="eggNOG" id="COG0105">
    <property type="taxonomic scope" value="Bacteria"/>
</dbReference>
<dbReference type="HOGENOM" id="CLU_060216_8_1_6"/>
<dbReference type="GO" id="GO:0005737">
    <property type="term" value="C:cytoplasm"/>
    <property type="evidence" value="ECO:0007669"/>
    <property type="project" value="UniProtKB-SubCell"/>
</dbReference>
<dbReference type="GO" id="GO:0005524">
    <property type="term" value="F:ATP binding"/>
    <property type="evidence" value="ECO:0007669"/>
    <property type="project" value="UniProtKB-UniRule"/>
</dbReference>
<dbReference type="GO" id="GO:0046872">
    <property type="term" value="F:metal ion binding"/>
    <property type="evidence" value="ECO:0007669"/>
    <property type="project" value="UniProtKB-KW"/>
</dbReference>
<dbReference type="GO" id="GO:0004550">
    <property type="term" value="F:nucleoside diphosphate kinase activity"/>
    <property type="evidence" value="ECO:0007669"/>
    <property type="project" value="UniProtKB-UniRule"/>
</dbReference>
<dbReference type="GO" id="GO:0006241">
    <property type="term" value="P:CTP biosynthetic process"/>
    <property type="evidence" value="ECO:0007669"/>
    <property type="project" value="UniProtKB-UniRule"/>
</dbReference>
<dbReference type="GO" id="GO:0006183">
    <property type="term" value="P:GTP biosynthetic process"/>
    <property type="evidence" value="ECO:0007669"/>
    <property type="project" value="UniProtKB-UniRule"/>
</dbReference>
<dbReference type="GO" id="GO:0006228">
    <property type="term" value="P:UTP biosynthetic process"/>
    <property type="evidence" value="ECO:0007669"/>
    <property type="project" value="UniProtKB-UniRule"/>
</dbReference>
<dbReference type="CDD" id="cd04413">
    <property type="entry name" value="NDPk_I"/>
    <property type="match status" value="1"/>
</dbReference>
<dbReference type="FunFam" id="3.30.70.141:FF:000001">
    <property type="entry name" value="Nucleoside diphosphate kinase"/>
    <property type="match status" value="1"/>
</dbReference>
<dbReference type="Gene3D" id="3.30.70.141">
    <property type="entry name" value="Nucleoside diphosphate kinase-like domain"/>
    <property type="match status" value="1"/>
</dbReference>
<dbReference type="HAMAP" id="MF_00451">
    <property type="entry name" value="NDP_kinase"/>
    <property type="match status" value="1"/>
</dbReference>
<dbReference type="InterPro" id="IPR034907">
    <property type="entry name" value="NDK-like_dom"/>
</dbReference>
<dbReference type="InterPro" id="IPR036850">
    <property type="entry name" value="NDK-like_dom_sf"/>
</dbReference>
<dbReference type="InterPro" id="IPR001564">
    <property type="entry name" value="Nucleoside_diP_kinase"/>
</dbReference>
<dbReference type="InterPro" id="IPR023005">
    <property type="entry name" value="Nucleoside_diP_kinase_AS"/>
</dbReference>
<dbReference type="NCBIfam" id="NF001908">
    <property type="entry name" value="PRK00668.1"/>
    <property type="match status" value="1"/>
</dbReference>
<dbReference type="PANTHER" id="PTHR46161">
    <property type="entry name" value="NUCLEOSIDE DIPHOSPHATE KINASE"/>
    <property type="match status" value="1"/>
</dbReference>
<dbReference type="PANTHER" id="PTHR46161:SF3">
    <property type="entry name" value="NUCLEOSIDE DIPHOSPHATE KINASE DDB_G0292928-RELATED"/>
    <property type="match status" value="1"/>
</dbReference>
<dbReference type="Pfam" id="PF00334">
    <property type="entry name" value="NDK"/>
    <property type="match status" value="1"/>
</dbReference>
<dbReference type="PRINTS" id="PR01243">
    <property type="entry name" value="NUCDPKINASE"/>
</dbReference>
<dbReference type="SMART" id="SM00562">
    <property type="entry name" value="NDK"/>
    <property type="match status" value="1"/>
</dbReference>
<dbReference type="SUPFAM" id="SSF54919">
    <property type="entry name" value="Nucleoside diphosphate kinase, NDK"/>
    <property type="match status" value="1"/>
</dbReference>
<dbReference type="PROSITE" id="PS00469">
    <property type="entry name" value="NDPK"/>
    <property type="match status" value="1"/>
</dbReference>
<dbReference type="PROSITE" id="PS51374">
    <property type="entry name" value="NDPK_LIKE"/>
    <property type="match status" value="1"/>
</dbReference>
<evidence type="ECO:0000255" key="1">
    <source>
        <dbReference type="HAMAP-Rule" id="MF_00451"/>
    </source>
</evidence>